<proteinExistence type="evidence at protein level"/>
<gene>
    <name evidence="2" type="primary">pnbB</name>
    <name evidence="4" type="ORF">KM427_00690</name>
</gene>
<keyword id="KW-0456">Lyase</keyword>
<feature type="chain" id="PRO_0000461680" description="4-hydroxylaminobenzoate lyase">
    <location>
        <begin position="1"/>
        <end position="169"/>
    </location>
</feature>
<protein>
    <recommendedName>
        <fullName evidence="2">4-hydroxylaminobenzoate lyase</fullName>
        <ecNumber evidence="1">4.3.3.-</ecNumber>
    </recommendedName>
</protein>
<name>PNBB_NOCS0</name>
<organism>
    <name type="scientific">Nocardioides sp. (strain LMS-CY)</name>
    <dbReference type="NCBI Taxonomy" id="2840457"/>
    <lineage>
        <taxon>Bacteria</taxon>
        <taxon>Bacillati</taxon>
        <taxon>Actinomycetota</taxon>
        <taxon>Actinomycetes</taxon>
        <taxon>Propionibacteriales</taxon>
        <taxon>Nocardioidaceae</taxon>
        <taxon>Nocardioides</taxon>
    </lineage>
</organism>
<sequence>MSTPQDLIDASIPFLNELKNRTAGEDLEKWLNDAYGPGSEFYERVAGLVKDGVRDGWAANIEVDGPRYRRSRLAEPCEELNYFSITAVYMDSVEPYRGQYHQHPYGELNMVVPLNEGAELAGPRGWCGGGWTAPDPASHHYPEVRGGAIIALFYLPAGRISYDITPPAE</sequence>
<dbReference type="EC" id="4.3.3.-" evidence="1"/>
<dbReference type="EMBL" id="CP076104">
    <property type="protein sequence ID" value="QWF22306.1"/>
    <property type="molecule type" value="Genomic_DNA"/>
</dbReference>
<dbReference type="RefSeq" id="WP_215525890.1">
    <property type="nucleotide sequence ID" value="NZ_CP076104.1"/>
</dbReference>
<dbReference type="GO" id="GO:0016829">
    <property type="term" value="F:lyase activity"/>
    <property type="evidence" value="ECO:0007669"/>
    <property type="project" value="UniProtKB-KW"/>
</dbReference>
<dbReference type="InterPro" id="IPR032345">
    <property type="entry name" value="PnbB"/>
</dbReference>
<dbReference type="Pfam" id="PF16155">
    <property type="entry name" value="PnbB"/>
    <property type="match status" value="1"/>
</dbReference>
<evidence type="ECO:0000269" key="1">
    <source>
    </source>
</evidence>
<evidence type="ECO:0000303" key="2">
    <source>
    </source>
</evidence>
<evidence type="ECO:0000305" key="3"/>
<evidence type="ECO:0000312" key="4">
    <source>
        <dbReference type="EMBL" id="QWF22306.1"/>
    </source>
</evidence>
<comment type="function">
    <text evidence="1">Lyase involved in the degradation of nitroaromatic compounds (PubMed:34554625). Catalyzes the conversion of 4-hydroxylaminobenzoate to 3,4-dihydroxybenzoate (protocatechuate) (PubMed:34554625).</text>
</comment>
<comment type="catalytic activity">
    <reaction evidence="1">
        <text>4-hydroxylaminobenzoate + H2O + H(+) = 3,4-dihydroxybenzoate + NH4(+)</text>
        <dbReference type="Rhea" id="RHEA:80203"/>
        <dbReference type="ChEBI" id="CHEBI:15377"/>
        <dbReference type="ChEBI" id="CHEBI:15378"/>
        <dbReference type="ChEBI" id="CHEBI:28938"/>
        <dbReference type="ChEBI" id="CHEBI:36241"/>
        <dbReference type="ChEBI" id="CHEBI:231457"/>
    </reaction>
    <physiologicalReaction direction="left-to-right" evidence="1">
        <dbReference type="Rhea" id="RHEA:80204"/>
    </physiologicalReaction>
</comment>
<comment type="biophysicochemical properties">
    <kinetics>
        <KM evidence="1">162.3 uM for 4-hydroxylaminobenzoate</KM>
        <text evidence="1">kcat is 37.1 sec(-1) with 4-hydroxylaminobenzoate as substrate.</text>
    </kinetics>
    <phDependence>
        <text evidence="1">Optimum pH is 7.0.</text>
    </phDependence>
    <temperatureDependence>
        <text evidence="1">Optimum temperature is 30 degrees Celsius.</text>
    </temperatureDependence>
</comment>
<comment type="induction">
    <text evidence="1">In the absence of 4-nitrobenzoate, expression is repressed by the transcriptional regulator PnbX (PubMed:34554625). Transcription is induced by 4-nitrobenzoate (PubMed:34554625).</text>
</comment>
<comment type="similarity">
    <text evidence="3">Belongs to the PnbB family.</text>
</comment>
<accession>P0DXG7</accession>
<reference key="1">
    <citation type="journal article" date="2021" name="Environ. Microbiol.">
        <title>The low-nanomolar 4-nitrobenzoate-responsive repressor PnbX negatively regulates the actinomycete-derived 4-nitrobenzoate-degrading pnb locus.</title>
        <authorList>
            <person name="Cheng M."/>
            <person name="Qian Y."/>
            <person name="Xing Z."/>
            <person name="Zylstra G.J."/>
            <person name="Huang X."/>
        </authorList>
    </citation>
    <scope>NUCLEOTIDE SEQUENCE [LARGE SCALE GENOMIC DNA]</scope>
    <scope>FUNCTION</scope>
    <scope>CATALYTIC ACTIVITY</scope>
    <scope>BIOPHYSICOCHEMICAL PROPERTIES</scope>
    <scope>INDUCTION</scope>
    <source>
        <strain>LMS-CY</strain>
    </source>
</reference>